<evidence type="ECO:0000255" key="1">
    <source>
        <dbReference type="HAMAP-Rule" id="MF_01187"/>
    </source>
</evidence>
<proteinExistence type="inferred from homology"/>
<accession>Q492T1</accession>
<gene>
    <name type="ordered locus">BPEN_388</name>
</gene>
<keyword id="KW-1185">Reference proteome</keyword>
<sequence>MKYQLLKIIVCPVCHSKLSFDLEKKELICNVDNLAFPIRKGIPVLLKRDARNFIL</sequence>
<reference key="1">
    <citation type="journal article" date="2005" name="Genome Res.">
        <title>Genome sequence of Blochmannia pennsylvanicus indicates parallel evolutionary trends among bacterial mutualists of insects.</title>
        <authorList>
            <person name="Degnan P.H."/>
            <person name="Lazarus A.B."/>
            <person name="Wernegreen J.J."/>
        </authorList>
    </citation>
    <scope>NUCLEOTIDE SEQUENCE [LARGE SCALE GENOMIC DNA]</scope>
    <source>
        <strain>BPEN</strain>
    </source>
</reference>
<name>Y388_BLOPB</name>
<feature type="chain" id="PRO_0000291061" description="UPF0434 protein BPEN_388">
    <location>
        <begin position="1"/>
        <end position="55"/>
    </location>
</feature>
<organism>
    <name type="scientific">Blochmanniella pennsylvanica (strain BPEN)</name>
    <dbReference type="NCBI Taxonomy" id="291272"/>
    <lineage>
        <taxon>Bacteria</taxon>
        <taxon>Pseudomonadati</taxon>
        <taxon>Pseudomonadota</taxon>
        <taxon>Gammaproteobacteria</taxon>
        <taxon>Enterobacterales</taxon>
        <taxon>Enterobacteriaceae</taxon>
        <taxon>ant endosymbionts</taxon>
        <taxon>Candidatus Blochmanniella</taxon>
    </lineage>
</organism>
<protein>
    <recommendedName>
        <fullName evidence="1">UPF0434 protein BPEN_388</fullName>
    </recommendedName>
</protein>
<comment type="similarity">
    <text evidence="1">Belongs to the UPF0434 family.</text>
</comment>
<dbReference type="EMBL" id="CP000016">
    <property type="protein sequence ID" value="AAZ41012.1"/>
    <property type="molecule type" value="Genomic_DNA"/>
</dbReference>
<dbReference type="RefSeq" id="WP_011282921.1">
    <property type="nucleotide sequence ID" value="NC_007292.1"/>
</dbReference>
<dbReference type="SMR" id="Q492T1"/>
<dbReference type="STRING" id="291272.BPEN_388"/>
<dbReference type="KEGG" id="bpn:BPEN_388"/>
<dbReference type="eggNOG" id="COG2835">
    <property type="taxonomic scope" value="Bacteria"/>
</dbReference>
<dbReference type="HOGENOM" id="CLU_155659_3_0_6"/>
<dbReference type="OrthoDB" id="9812205at2"/>
<dbReference type="Proteomes" id="UP000007794">
    <property type="component" value="Chromosome"/>
</dbReference>
<dbReference type="GO" id="GO:0005829">
    <property type="term" value="C:cytosol"/>
    <property type="evidence" value="ECO:0007669"/>
    <property type="project" value="TreeGrafter"/>
</dbReference>
<dbReference type="FunFam" id="2.20.25.10:FF:000002">
    <property type="entry name" value="UPF0434 protein YcaR"/>
    <property type="match status" value="1"/>
</dbReference>
<dbReference type="Gene3D" id="2.20.25.10">
    <property type="match status" value="1"/>
</dbReference>
<dbReference type="HAMAP" id="MF_01187">
    <property type="entry name" value="UPF0434"/>
    <property type="match status" value="1"/>
</dbReference>
<dbReference type="InterPro" id="IPR005651">
    <property type="entry name" value="Trm112-like"/>
</dbReference>
<dbReference type="PANTHER" id="PTHR33505:SF4">
    <property type="entry name" value="PROTEIN PREY, MITOCHONDRIAL"/>
    <property type="match status" value="1"/>
</dbReference>
<dbReference type="PANTHER" id="PTHR33505">
    <property type="entry name" value="ZGC:162634"/>
    <property type="match status" value="1"/>
</dbReference>
<dbReference type="Pfam" id="PF03966">
    <property type="entry name" value="Trm112p"/>
    <property type="match status" value="1"/>
</dbReference>
<dbReference type="SUPFAM" id="SSF158997">
    <property type="entry name" value="Trm112p-like"/>
    <property type="match status" value="1"/>
</dbReference>